<organism>
    <name type="scientific">Pseudomonas aeruginosa (strain ATCC 15692 / DSM 22644 / CIP 104116 / JCM 14847 / LMG 12228 / 1C / PRS 101 / PAO1)</name>
    <dbReference type="NCBI Taxonomy" id="208964"/>
    <lineage>
        <taxon>Bacteria</taxon>
        <taxon>Pseudomonadati</taxon>
        <taxon>Pseudomonadota</taxon>
        <taxon>Gammaproteobacteria</taxon>
        <taxon>Pseudomonadales</taxon>
        <taxon>Pseudomonadaceae</taxon>
        <taxon>Pseudomonas</taxon>
    </lineage>
</organism>
<keyword id="KW-0131">Cell cycle</keyword>
<keyword id="KW-0132">Cell division</keyword>
<keyword id="KW-0159">Chromosome partition</keyword>
<keyword id="KW-0963">Cytoplasm</keyword>
<keyword id="KW-0229">DNA integration</keyword>
<keyword id="KW-0233">DNA recombination</keyword>
<keyword id="KW-0238">DNA-binding</keyword>
<keyword id="KW-1185">Reference proteome</keyword>
<reference key="1">
    <citation type="journal article" date="1994" name="Mol. Microbiol.">
        <title>The sss gene product, which affects pyoverdin production in Pseudomonas aeruginosa 7NSK2, is a site-specific recombinase.</title>
        <authorList>
            <person name="Hoefte M."/>
            <person name="Dong Q."/>
            <person name="Kourambas S."/>
            <person name="Krishnapillai V."/>
            <person name="Sherratt D.J."/>
            <person name="Mergeay M."/>
        </authorList>
    </citation>
    <scope>NUCLEOTIDE SEQUENCE [GENOMIC DNA]</scope>
    <scope>DISRUPTION PHENOTYPE</scope>
    <source>
        <strain>7NSK2</strain>
    </source>
</reference>
<reference key="2">
    <citation type="journal article" date="2000" name="Nature">
        <title>Complete genome sequence of Pseudomonas aeruginosa PAO1, an opportunistic pathogen.</title>
        <authorList>
            <person name="Stover C.K."/>
            <person name="Pham X.-Q.T."/>
            <person name="Erwin A.L."/>
            <person name="Mizoguchi S.D."/>
            <person name="Warrener P."/>
            <person name="Hickey M.J."/>
            <person name="Brinkman F.S.L."/>
            <person name="Hufnagle W.O."/>
            <person name="Kowalik D.J."/>
            <person name="Lagrou M."/>
            <person name="Garber R.L."/>
            <person name="Goltry L."/>
            <person name="Tolentino E."/>
            <person name="Westbrock-Wadman S."/>
            <person name="Yuan Y."/>
            <person name="Brody L.L."/>
            <person name="Coulter S.N."/>
            <person name="Folger K.R."/>
            <person name="Kas A."/>
            <person name="Larbig K."/>
            <person name="Lim R.M."/>
            <person name="Smith K.A."/>
            <person name="Spencer D.H."/>
            <person name="Wong G.K.-S."/>
            <person name="Wu Z."/>
            <person name="Paulsen I.T."/>
            <person name="Reizer J."/>
            <person name="Saier M.H. Jr."/>
            <person name="Hancock R.E.W."/>
            <person name="Lory S."/>
            <person name="Olson M.V."/>
        </authorList>
    </citation>
    <scope>NUCLEOTIDE SEQUENCE [LARGE SCALE GENOMIC DNA]</scope>
    <source>
        <strain>ATCC 15692 / DSM 22644 / CIP 104116 / JCM 14847 / LMG 12228 / 1C / PRS 101 / PAO1</strain>
    </source>
</reference>
<reference key="3">
    <citation type="journal article" date="2000" name="J. Biol. Chem.">
        <title>Sequential strand exchange by XerC and XerD during site-specific recombination at dif.</title>
        <authorList>
            <person name="Blakely G.W."/>
            <person name="Davidson A.O."/>
            <person name="Sherratt D.J."/>
        </authorList>
    </citation>
    <scope>FUNCTION</scope>
</reference>
<evidence type="ECO:0000250" key="1"/>
<evidence type="ECO:0000255" key="2">
    <source>
        <dbReference type="PROSITE-ProRule" id="PRU01246"/>
    </source>
</evidence>
<evidence type="ECO:0000255" key="3">
    <source>
        <dbReference type="PROSITE-ProRule" id="PRU01248"/>
    </source>
</evidence>
<evidence type="ECO:0000269" key="4">
    <source>
    </source>
</evidence>
<evidence type="ECO:0000269" key="5">
    <source>
    </source>
</evidence>
<evidence type="ECO:0000305" key="6"/>
<protein>
    <recommendedName>
        <fullName>Tyrosine recombinase XerC</fullName>
    </recommendedName>
</protein>
<dbReference type="EMBL" id="X78478">
    <property type="protein sequence ID" value="CAA55226.1"/>
    <property type="molecule type" value="Genomic_DNA"/>
</dbReference>
<dbReference type="EMBL" id="AE004091">
    <property type="protein sequence ID" value="AAG08665.1"/>
    <property type="molecule type" value="Genomic_DNA"/>
</dbReference>
<dbReference type="PIR" id="A82987">
    <property type="entry name" value="A82987"/>
</dbReference>
<dbReference type="PIR" id="S61402">
    <property type="entry name" value="S61402"/>
</dbReference>
<dbReference type="RefSeq" id="NP_253967.1">
    <property type="nucleotide sequence ID" value="NC_002516.2"/>
</dbReference>
<dbReference type="RefSeq" id="WP_003114345.1">
    <property type="nucleotide sequence ID" value="NZ_QZGE01000020.1"/>
</dbReference>
<dbReference type="SMR" id="Q51566"/>
<dbReference type="FunCoup" id="Q51566">
    <property type="interactions" value="55"/>
</dbReference>
<dbReference type="STRING" id="208964.PA5280"/>
<dbReference type="PaxDb" id="208964-PA5280"/>
<dbReference type="DNASU" id="878328"/>
<dbReference type="GeneID" id="878328"/>
<dbReference type="KEGG" id="pae:PA5280"/>
<dbReference type="PATRIC" id="fig|208964.12.peg.5534"/>
<dbReference type="PseudoCAP" id="PA5280"/>
<dbReference type="HOGENOM" id="CLU_027562_9_0_6"/>
<dbReference type="InParanoid" id="Q51566"/>
<dbReference type="OrthoDB" id="9801717at2"/>
<dbReference type="PhylomeDB" id="Q51566"/>
<dbReference type="BioCyc" id="PAER208964:G1FZ6-5401-MONOMER"/>
<dbReference type="Proteomes" id="UP000002438">
    <property type="component" value="Chromosome"/>
</dbReference>
<dbReference type="GO" id="GO:0005737">
    <property type="term" value="C:cytoplasm"/>
    <property type="evidence" value="ECO:0007669"/>
    <property type="project" value="UniProtKB-SubCell"/>
</dbReference>
<dbReference type="GO" id="GO:0048476">
    <property type="term" value="C:Holliday junction resolvase complex"/>
    <property type="evidence" value="ECO:0000318"/>
    <property type="project" value="GO_Central"/>
</dbReference>
<dbReference type="GO" id="GO:0003677">
    <property type="term" value="F:DNA binding"/>
    <property type="evidence" value="ECO:0000318"/>
    <property type="project" value="GO_Central"/>
</dbReference>
<dbReference type="GO" id="GO:0009037">
    <property type="term" value="F:tyrosine-based site-specific recombinase activity"/>
    <property type="evidence" value="ECO:0000318"/>
    <property type="project" value="GO_Central"/>
</dbReference>
<dbReference type="GO" id="GO:0051301">
    <property type="term" value="P:cell division"/>
    <property type="evidence" value="ECO:0007669"/>
    <property type="project" value="UniProtKB-KW"/>
</dbReference>
<dbReference type="GO" id="GO:0071294">
    <property type="term" value="P:cellular response to zinc ion"/>
    <property type="evidence" value="ECO:0000315"/>
    <property type="project" value="PseudoCAP"/>
</dbReference>
<dbReference type="GO" id="GO:0007059">
    <property type="term" value="P:chromosome segregation"/>
    <property type="evidence" value="ECO:0000318"/>
    <property type="project" value="GO_Central"/>
</dbReference>
<dbReference type="GO" id="GO:0006310">
    <property type="term" value="P:DNA recombination"/>
    <property type="evidence" value="ECO:0000318"/>
    <property type="project" value="GO_Central"/>
</dbReference>
<dbReference type="GO" id="GO:0006313">
    <property type="term" value="P:DNA transposition"/>
    <property type="evidence" value="ECO:0007669"/>
    <property type="project" value="UniProtKB-UniRule"/>
</dbReference>
<dbReference type="GO" id="GO:0071139">
    <property type="term" value="P:resolution of DNA recombination intermediates"/>
    <property type="evidence" value="ECO:0000318"/>
    <property type="project" value="GO_Central"/>
</dbReference>
<dbReference type="CDD" id="cd00798">
    <property type="entry name" value="INT_XerDC_C"/>
    <property type="match status" value="1"/>
</dbReference>
<dbReference type="Gene3D" id="1.10.150.130">
    <property type="match status" value="1"/>
</dbReference>
<dbReference type="Gene3D" id="1.10.443.10">
    <property type="entry name" value="Intergrase catalytic core"/>
    <property type="match status" value="1"/>
</dbReference>
<dbReference type="HAMAP" id="MF_01808">
    <property type="entry name" value="Recomb_XerC_XerD"/>
    <property type="match status" value="1"/>
</dbReference>
<dbReference type="InterPro" id="IPR044068">
    <property type="entry name" value="CB"/>
</dbReference>
<dbReference type="InterPro" id="IPR011010">
    <property type="entry name" value="DNA_brk_join_enz"/>
</dbReference>
<dbReference type="InterPro" id="IPR013762">
    <property type="entry name" value="Integrase-like_cat_sf"/>
</dbReference>
<dbReference type="InterPro" id="IPR002104">
    <property type="entry name" value="Integrase_catalytic"/>
</dbReference>
<dbReference type="InterPro" id="IPR010998">
    <property type="entry name" value="Integrase_recombinase_N"/>
</dbReference>
<dbReference type="InterPro" id="IPR004107">
    <property type="entry name" value="Integrase_SAM-like_N"/>
</dbReference>
<dbReference type="InterPro" id="IPR011931">
    <property type="entry name" value="Recomb_XerC"/>
</dbReference>
<dbReference type="InterPro" id="IPR023009">
    <property type="entry name" value="Tyrosine_recombinase_XerC/XerD"/>
</dbReference>
<dbReference type="InterPro" id="IPR050090">
    <property type="entry name" value="Tyrosine_recombinase_XerCD"/>
</dbReference>
<dbReference type="NCBIfam" id="NF001399">
    <property type="entry name" value="PRK00283.1"/>
    <property type="match status" value="1"/>
</dbReference>
<dbReference type="NCBIfam" id="TIGR02224">
    <property type="entry name" value="recomb_XerC"/>
    <property type="match status" value="1"/>
</dbReference>
<dbReference type="PANTHER" id="PTHR30349">
    <property type="entry name" value="PHAGE INTEGRASE-RELATED"/>
    <property type="match status" value="1"/>
</dbReference>
<dbReference type="PANTHER" id="PTHR30349:SF81">
    <property type="entry name" value="TYROSINE RECOMBINASE XERC"/>
    <property type="match status" value="1"/>
</dbReference>
<dbReference type="Pfam" id="PF02899">
    <property type="entry name" value="Phage_int_SAM_1"/>
    <property type="match status" value="1"/>
</dbReference>
<dbReference type="Pfam" id="PF00589">
    <property type="entry name" value="Phage_integrase"/>
    <property type="match status" value="1"/>
</dbReference>
<dbReference type="SUPFAM" id="SSF56349">
    <property type="entry name" value="DNA breaking-rejoining enzymes"/>
    <property type="match status" value="1"/>
</dbReference>
<dbReference type="SUPFAM" id="SSF47823">
    <property type="entry name" value="lambda integrase-like, N-terminal domain"/>
    <property type="match status" value="1"/>
</dbReference>
<dbReference type="PROSITE" id="PS51900">
    <property type="entry name" value="CB"/>
    <property type="match status" value="1"/>
</dbReference>
<dbReference type="PROSITE" id="PS51898">
    <property type="entry name" value="TYR_RECOMBINASE"/>
    <property type="match status" value="1"/>
</dbReference>
<comment type="function">
    <text evidence="1 4">Site-specific tyrosine recombinase, which acts by catalyzing the cutting and rejoining of the recombining DNA molecules. The XerC-XerD complex is essential to convert dimers of the bacterial chromosome into monomers to permit their segregation at cell division. It also contributes to the segregational stability of plasmids (By similarity).</text>
</comment>
<comment type="subunit">
    <text evidence="1">Forms a cyclic heterotetrameric complex composed of two molecules of XerC and two molecules of XerD.</text>
</comment>
<comment type="subcellular location">
    <subcellularLocation>
        <location evidence="1">Cytoplasm</location>
    </subcellularLocation>
</comment>
<comment type="disruption phenotype">
    <text evidence="5">Defects affect induction of pyoverdin and related outer membrane proteins.</text>
</comment>
<comment type="similarity">
    <text evidence="6">Belongs to the 'phage' integrase family. XerC subfamily.</text>
</comment>
<accession>Q51566</accession>
<accession>Q9HTS4</accession>
<feature type="chain" id="PRO_0000095314" description="Tyrosine recombinase XerC">
    <location>
        <begin position="1"/>
        <end position="303"/>
    </location>
</feature>
<feature type="domain" description="Core-binding (CB)" evidence="3">
    <location>
        <begin position="1"/>
        <end position="85"/>
    </location>
</feature>
<feature type="domain" description="Tyr recombinase" evidence="2">
    <location>
        <begin position="106"/>
        <end position="285"/>
    </location>
</feature>
<feature type="active site" evidence="2">
    <location>
        <position position="146"/>
    </location>
</feature>
<feature type="active site" evidence="2">
    <location>
        <position position="170"/>
    </location>
</feature>
<feature type="active site" evidence="2">
    <location>
        <position position="237"/>
    </location>
</feature>
<feature type="active site" evidence="2">
    <location>
        <position position="240"/>
    </location>
</feature>
<feature type="active site" evidence="2">
    <location>
        <position position="263"/>
    </location>
</feature>
<feature type="active site" description="O-(3'-phospho-DNA)-tyrosine intermediate" evidence="2">
    <location>
        <position position="272"/>
    </location>
</feature>
<feature type="sequence conflict" description="In Ref. 1; CAA55226." evidence="6" ref="1">
    <original>S</original>
    <variation>R</variation>
    <location>
        <position position="99"/>
    </location>
</feature>
<feature type="sequence conflict" description="In Ref. 1; CAA55226." evidence="6" ref="1">
    <original>RAH</original>
    <variation>API</variation>
    <location>
        <begin position="286"/>
        <end position="288"/>
    </location>
</feature>
<feature type="sequence conflict" description="In Ref. 1; CAA55226." evidence="6" ref="1">
    <original>RKGNA</original>
    <variation>QGQR</variation>
    <location>
        <begin position="293"/>
        <end position="297"/>
    </location>
</feature>
<name>XERC_PSEAE</name>
<gene>
    <name type="primary">xerC</name>
    <name type="synonym">sss</name>
    <name type="ordered locus">PA5280</name>
</gene>
<sequence length="303" mass="33930">MRADLDAFLEHLRSERQVSAHTLDGYRRDLLKILALAEKAGLSDWNALDTRSLRTFVARLHQQGQSSRSLARLLSATRGLYQYLLREGRCRHDPANGLSAPKSPRKLPRTLDADRALQLLDGAVEDDFIARRDQALLELFYSSGLRLSELVGLDLEWLDLKEGLVRVRGKGNKVRELPVGKAARQALEAWLPLRTQAAPEDGAVFIGRSGKRLTPRAIQLRVRQAGVRELGQHLHPHMLRHSFASHLLESSGDLRAVQELLGHADIATTQIYTHLDFQHLASVYDRAHPRAKRKGNADGGNDP</sequence>
<proteinExistence type="inferred from homology"/>